<organism>
    <name type="scientific">Xanthomonas campestris pv. campestris (strain B100)</name>
    <dbReference type="NCBI Taxonomy" id="509169"/>
    <lineage>
        <taxon>Bacteria</taxon>
        <taxon>Pseudomonadati</taxon>
        <taxon>Pseudomonadota</taxon>
        <taxon>Gammaproteobacteria</taxon>
        <taxon>Lysobacterales</taxon>
        <taxon>Lysobacteraceae</taxon>
        <taxon>Xanthomonas</taxon>
    </lineage>
</organism>
<gene>
    <name evidence="1" type="primary">rbfA</name>
    <name type="ordered locus">xcc-b100_1650</name>
</gene>
<protein>
    <recommendedName>
        <fullName evidence="1">Ribosome-binding factor A</fullName>
    </recommendedName>
</protein>
<reference key="1">
    <citation type="journal article" date="2008" name="J. Biotechnol.">
        <title>The genome of Xanthomonas campestris pv. campestris B100 and its use for the reconstruction of metabolic pathways involved in xanthan biosynthesis.</title>
        <authorList>
            <person name="Vorhoelter F.-J."/>
            <person name="Schneiker S."/>
            <person name="Goesmann A."/>
            <person name="Krause L."/>
            <person name="Bekel T."/>
            <person name="Kaiser O."/>
            <person name="Linke B."/>
            <person name="Patschkowski T."/>
            <person name="Rueckert C."/>
            <person name="Schmid J."/>
            <person name="Sidhu V.K."/>
            <person name="Sieber V."/>
            <person name="Tauch A."/>
            <person name="Watt S.A."/>
            <person name="Weisshaar B."/>
            <person name="Becker A."/>
            <person name="Niehaus K."/>
            <person name="Puehler A."/>
        </authorList>
    </citation>
    <scope>NUCLEOTIDE SEQUENCE [LARGE SCALE GENOMIC DNA]</scope>
    <source>
        <strain>B100</strain>
    </source>
</reference>
<comment type="function">
    <text evidence="1">One of several proteins that assist in the late maturation steps of the functional core of the 30S ribosomal subunit. Associates with free 30S ribosomal subunits (but not with 30S subunits that are part of 70S ribosomes or polysomes). Required for efficient processing of 16S rRNA. May interact with the 5'-terminal helix region of 16S rRNA.</text>
</comment>
<comment type="subunit">
    <text evidence="1">Monomer. Binds 30S ribosomal subunits, but not 50S ribosomal subunits or 70S ribosomes.</text>
</comment>
<comment type="subcellular location">
    <subcellularLocation>
        <location evidence="1">Cytoplasm</location>
    </subcellularLocation>
</comment>
<comment type="similarity">
    <text evidence="1">Belongs to the RbfA family.</text>
</comment>
<feature type="chain" id="PRO_0000334707" description="Ribosome-binding factor A">
    <location>
        <begin position="1"/>
        <end position="132"/>
    </location>
</feature>
<proteinExistence type="inferred from homology"/>
<dbReference type="EMBL" id="AM920689">
    <property type="protein sequence ID" value="CAP51000.1"/>
    <property type="molecule type" value="Genomic_DNA"/>
</dbReference>
<dbReference type="SMR" id="B0RRB5"/>
<dbReference type="KEGG" id="xca:xcc-b100_1650"/>
<dbReference type="HOGENOM" id="CLU_089475_6_3_6"/>
<dbReference type="Proteomes" id="UP000001188">
    <property type="component" value="Chromosome"/>
</dbReference>
<dbReference type="GO" id="GO:0005829">
    <property type="term" value="C:cytosol"/>
    <property type="evidence" value="ECO:0007669"/>
    <property type="project" value="TreeGrafter"/>
</dbReference>
<dbReference type="GO" id="GO:0043024">
    <property type="term" value="F:ribosomal small subunit binding"/>
    <property type="evidence" value="ECO:0007669"/>
    <property type="project" value="TreeGrafter"/>
</dbReference>
<dbReference type="GO" id="GO:0030490">
    <property type="term" value="P:maturation of SSU-rRNA"/>
    <property type="evidence" value="ECO:0007669"/>
    <property type="project" value="UniProtKB-UniRule"/>
</dbReference>
<dbReference type="FunFam" id="3.30.300.20:FF:000022">
    <property type="entry name" value="Ribosome-binding factor A"/>
    <property type="match status" value="1"/>
</dbReference>
<dbReference type="Gene3D" id="3.30.300.20">
    <property type="match status" value="1"/>
</dbReference>
<dbReference type="HAMAP" id="MF_00003">
    <property type="entry name" value="RbfA"/>
    <property type="match status" value="1"/>
</dbReference>
<dbReference type="InterPro" id="IPR015946">
    <property type="entry name" value="KH_dom-like_a/b"/>
</dbReference>
<dbReference type="InterPro" id="IPR000238">
    <property type="entry name" value="RbfA"/>
</dbReference>
<dbReference type="InterPro" id="IPR023799">
    <property type="entry name" value="RbfA_dom_sf"/>
</dbReference>
<dbReference type="InterPro" id="IPR020053">
    <property type="entry name" value="Ribosome-bd_factorA_CS"/>
</dbReference>
<dbReference type="NCBIfam" id="TIGR00082">
    <property type="entry name" value="rbfA"/>
    <property type="match status" value="1"/>
</dbReference>
<dbReference type="PANTHER" id="PTHR33515">
    <property type="entry name" value="RIBOSOME-BINDING FACTOR A, CHLOROPLASTIC-RELATED"/>
    <property type="match status" value="1"/>
</dbReference>
<dbReference type="PANTHER" id="PTHR33515:SF1">
    <property type="entry name" value="RIBOSOME-BINDING FACTOR A, CHLOROPLASTIC-RELATED"/>
    <property type="match status" value="1"/>
</dbReference>
<dbReference type="Pfam" id="PF02033">
    <property type="entry name" value="RBFA"/>
    <property type="match status" value="1"/>
</dbReference>
<dbReference type="SUPFAM" id="SSF89919">
    <property type="entry name" value="Ribosome-binding factor A, RbfA"/>
    <property type="match status" value="1"/>
</dbReference>
<dbReference type="PROSITE" id="PS01319">
    <property type="entry name" value="RBFA"/>
    <property type="match status" value="1"/>
</dbReference>
<sequence>MTMPTKSFHRTDRVSAQVRRDLGTIVHAAVRDHGLPSVSVSDVEISRDLAHAKVFVTALQQERSAEAVKGLKEIAGQLRTQLARAMKLRHVPELHFHYDDSVDRGERIDNLLRDLDDIGPEAAPDAQDAEPR</sequence>
<evidence type="ECO:0000255" key="1">
    <source>
        <dbReference type="HAMAP-Rule" id="MF_00003"/>
    </source>
</evidence>
<keyword id="KW-0963">Cytoplasm</keyword>
<keyword id="KW-0690">Ribosome biogenesis</keyword>
<accession>B0RRB5</accession>
<name>RBFA_XANCB</name>